<accession>Q9LJK2</accession>
<accession>Q8LF37</accession>
<proteinExistence type="evidence at transcript level"/>
<comment type="function">
    <text evidence="4 5">Involved in the oxidative degradation of abscisic acid, but not in the isomerization of the produced 8'-hydroxyabscisic acid (8'-OH-ABA) to (-)-phaseic acid (PA).</text>
</comment>
<comment type="catalytic activity">
    <reaction evidence="2">
        <text>2-cis-(+)-abscisate + reduced [NADPH--hemoprotein reductase] + O2 = (+)-8'-hydroxyabscisate + oxidized [NADPH--hemoprotein reductase] + H2O + H(+)</text>
        <dbReference type="Rhea" id="RHEA:12897"/>
        <dbReference type="Rhea" id="RHEA-COMP:11964"/>
        <dbReference type="Rhea" id="RHEA-COMP:11965"/>
        <dbReference type="ChEBI" id="CHEBI:15377"/>
        <dbReference type="ChEBI" id="CHEBI:15378"/>
        <dbReference type="ChEBI" id="CHEBI:15379"/>
        <dbReference type="ChEBI" id="CHEBI:37569"/>
        <dbReference type="ChEBI" id="CHEBI:57618"/>
        <dbReference type="ChEBI" id="CHEBI:58210"/>
        <dbReference type="ChEBI" id="CHEBI:58490"/>
        <dbReference type="EC" id="1.14.14.137"/>
    </reaction>
</comment>
<comment type="cofactor">
    <cofactor evidence="1">
        <name>heme</name>
        <dbReference type="ChEBI" id="CHEBI:30413"/>
    </cofactor>
</comment>
<comment type="pathway">
    <text>Plant hormone degradation; abscisic acid degradation.</text>
</comment>
<comment type="subcellular location">
    <subcellularLocation>
        <location evidence="6">Membrane</location>
        <topology evidence="6">Single-pass membrane protein</topology>
    </subcellularLocation>
</comment>
<comment type="tissue specificity">
    <text evidence="4 5">Mainly expressed in flowers. Lower expression in siliques, rosette leaves, roots and stems. Not expressed in dry seeds. Expressed in silique envelopes, but not in embryo or endosperm during the seed development.</text>
</comment>
<comment type="developmental stage">
    <text evidence="4 5">Not induced after imbibition.</text>
</comment>
<comment type="induction">
    <text evidence="4">By abscisic acid, dehydration and rehydration.</text>
</comment>
<comment type="similarity">
    <text evidence="6">Belongs to the cytochrome P450 family.</text>
</comment>
<comment type="sequence caution" evidence="6">
    <conflict type="erroneous gene model prediction">
        <sequence resource="EMBL-CDS" id="BAB02968"/>
    </conflict>
</comment>
<dbReference type="EC" id="1.14.14.137" evidence="2"/>
<dbReference type="EMBL" id="AP000419">
    <property type="protein sequence ID" value="BAB02968.1"/>
    <property type="status" value="ALT_SEQ"/>
    <property type="molecule type" value="Genomic_DNA"/>
</dbReference>
<dbReference type="EMBL" id="CP002686">
    <property type="protein sequence ID" value="ANM64023.1"/>
    <property type="molecule type" value="Genomic_DNA"/>
</dbReference>
<dbReference type="EMBL" id="AY085068">
    <property type="protein sequence ID" value="AAM61624.1"/>
    <property type="molecule type" value="mRNA"/>
</dbReference>
<dbReference type="RefSeq" id="NP_001319589.1">
    <property type="nucleotide sequence ID" value="NM_001338388.1"/>
</dbReference>
<dbReference type="RefSeq" id="NP_566628.1">
    <property type="nucleotide sequence ID" value="NM_112814.2"/>
</dbReference>
<dbReference type="SMR" id="Q9LJK2"/>
<dbReference type="FunCoup" id="Q9LJK2">
    <property type="interactions" value="222"/>
</dbReference>
<dbReference type="STRING" id="3702.Q9LJK2"/>
<dbReference type="iPTMnet" id="Q9LJK2"/>
<dbReference type="PaxDb" id="3702-AT3G19270.1"/>
<dbReference type="EnsemblPlants" id="AT3G19270.2">
    <property type="protein sequence ID" value="AT3G19270.2"/>
    <property type="gene ID" value="AT3G19270"/>
</dbReference>
<dbReference type="GeneID" id="821461"/>
<dbReference type="Gramene" id="AT3G19270.2">
    <property type="protein sequence ID" value="AT3G19270.2"/>
    <property type="gene ID" value="AT3G19270"/>
</dbReference>
<dbReference type="KEGG" id="ath:AT3G19270"/>
<dbReference type="Araport" id="AT3G19270"/>
<dbReference type="TAIR" id="AT3G19270">
    <property type="gene designation" value="CYP707A4"/>
</dbReference>
<dbReference type="eggNOG" id="KOG0157">
    <property type="taxonomic scope" value="Eukaryota"/>
</dbReference>
<dbReference type="HOGENOM" id="CLU_001570_15_5_1"/>
<dbReference type="InParanoid" id="Q9LJK2"/>
<dbReference type="OMA" id="AHMCLGL"/>
<dbReference type="PhylomeDB" id="Q9LJK2"/>
<dbReference type="BioCyc" id="ARA:AT3G19270-MONOMER"/>
<dbReference type="BioCyc" id="MetaCyc:AT3G19270-MONOMER"/>
<dbReference type="BRENDA" id="1.14.14.137">
    <property type="organism ID" value="399"/>
</dbReference>
<dbReference type="UniPathway" id="UPA00093"/>
<dbReference type="PRO" id="PR:Q9LJK2"/>
<dbReference type="Proteomes" id="UP000006548">
    <property type="component" value="Chromosome 3"/>
</dbReference>
<dbReference type="ExpressionAtlas" id="Q9LJK2">
    <property type="expression patterns" value="baseline and differential"/>
</dbReference>
<dbReference type="GO" id="GO:0016020">
    <property type="term" value="C:membrane"/>
    <property type="evidence" value="ECO:0007669"/>
    <property type="project" value="UniProtKB-SubCell"/>
</dbReference>
<dbReference type="GO" id="GO:0010295">
    <property type="term" value="F:(+)-abscisic acid 8'-hydroxylase activity"/>
    <property type="evidence" value="ECO:0000314"/>
    <property type="project" value="TAIR"/>
</dbReference>
<dbReference type="GO" id="GO:0020037">
    <property type="term" value="F:heme binding"/>
    <property type="evidence" value="ECO:0007669"/>
    <property type="project" value="InterPro"/>
</dbReference>
<dbReference type="GO" id="GO:0005506">
    <property type="term" value="F:iron ion binding"/>
    <property type="evidence" value="ECO:0007669"/>
    <property type="project" value="InterPro"/>
</dbReference>
<dbReference type="GO" id="GO:0046345">
    <property type="term" value="P:abscisic acid catabolic process"/>
    <property type="evidence" value="ECO:0007669"/>
    <property type="project" value="UniProtKB-UniPathway"/>
</dbReference>
<dbReference type="CDD" id="cd11043">
    <property type="entry name" value="CYP90-like"/>
    <property type="match status" value="1"/>
</dbReference>
<dbReference type="FunFam" id="1.10.630.10:FF:000014">
    <property type="entry name" value="Abscisic acid 8"/>
    <property type="match status" value="1"/>
</dbReference>
<dbReference type="Gene3D" id="1.10.630.10">
    <property type="entry name" value="Cytochrome P450"/>
    <property type="match status" value="1"/>
</dbReference>
<dbReference type="InterPro" id="IPR001128">
    <property type="entry name" value="Cyt_P450"/>
</dbReference>
<dbReference type="InterPro" id="IPR017972">
    <property type="entry name" value="Cyt_P450_CS"/>
</dbReference>
<dbReference type="InterPro" id="IPR002401">
    <property type="entry name" value="Cyt_P450_E_grp-I"/>
</dbReference>
<dbReference type="InterPro" id="IPR036396">
    <property type="entry name" value="Cyt_P450_sf"/>
</dbReference>
<dbReference type="PANTHER" id="PTHR24286:SF376">
    <property type="entry name" value="ABSCISIC ACID 8'-HYDROXYLASE 4"/>
    <property type="match status" value="1"/>
</dbReference>
<dbReference type="PANTHER" id="PTHR24286">
    <property type="entry name" value="CYTOCHROME P450 26"/>
    <property type="match status" value="1"/>
</dbReference>
<dbReference type="Pfam" id="PF00067">
    <property type="entry name" value="p450"/>
    <property type="match status" value="1"/>
</dbReference>
<dbReference type="PRINTS" id="PR00463">
    <property type="entry name" value="EP450I"/>
</dbReference>
<dbReference type="PRINTS" id="PR00385">
    <property type="entry name" value="P450"/>
</dbReference>
<dbReference type="SUPFAM" id="SSF48264">
    <property type="entry name" value="Cytochrome P450"/>
    <property type="match status" value="1"/>
</dbReference>
<dbReference type="PROSITE" id="PS00086">
    <property type="entry name" value="CYTOCHROME_P450"/>
    <property type="match status" value="1"/>
</dbReference>
<keyword id="KW-0349">Heme</keyword>
<keyword id="KW-0408">Iron</keyword>
<keyword id="KW-0472">Membrane</keyword>
<keyword id="KW-0479">Metal-binding</keyword>
<keyword id="KW-0503">Monooxygenase</keyword>
<keyword id="KW-0560">Oxidoreductase</keyword>
<keyword id="KW-1185">Reference proteome</keyword>
<keyword id="KW-0346">Stress response</keyword>
<keyword id="KW-0812">Transmembrane</keyword>
<keyword id="KW-1133">Transmembrane helix</keyword>
<sequence>MAEIWFLVVPILILCLLLVRVIVSKKKKNSRGKLPPGSMGWPYLGETLQLYSQNPNVFFTSKQKRYGEIFKTRILGYPCVMLASPEAARFVLVTHAHMFKPTYPRSKEKLIGPSALFFHQGDYHSHIRKLVQSSFYPETIRKLIPDIEHIALSSLQSWANMPIVSTYQEMKKFAFDVGILAIFGHLESSYKEILKHNYNIVDKGYNSFPMSLPGTSYHKALMARKQLKTIVSEIICERREKRALQTDFLGHLLNFKNEKGRVLTQEQIADNIIGVLFAAQDTTASCLTWILKYLHDDQKLLEAVKAEQKAIYEENSREKKPLTWRQTRNMPLTHKVIVESLRMASIISFTFREAVVDVEYKGYLIPKGWKVMPLFRNIHHNPKYFSNPEVFDPSRFEVNPKPNTFMPFGSGVHACPGNELAKLQILIFLHHLVSNFRWEVKGGEKGIQYSPFPIPQNGLPATFRRHSL</sequence>
<gene>
    <name type="primary">CYP707A4</name>
    <name type="ordered locus">At3g19270</name>
    <name type="ORF">MVI11.19</name>
</gene>
<organism>
    <name type="scientific">Arabidopsis thaliana</name>
    <name type="common">Mouse-ear cress</name>
    <dbReference type="NCBI Taxonomy" id="3702"/>
    <lineage>
        <taxon>Eukaryota</taxon>
        <taxon>Viridiplantae</taxon>
        <taxon>Streptophyta</taxon>
        <taxon>Embryophyta</taxon>
        <taxon>Tracheophyta</taxon>
        <taxon>Spermatophyta</taxon>
        <taxon>Magnoliopsida</taxon>
        <taxon>eudicotyledons</taxon>
        <taxon>Gunneridae</taxon>
        <taxon>Pentapetalae</taxon>
        <taxon>rosids</taxon>
        <taxon>malvids</taxon>
        <taxon>Brassicales</taxon>
        <taxon>Brassicaceae</taxon>
        <taxon>Camelineae</taxon>
        <taxon>Arabidopsis</taxon>
    </lineage>
</organism>
<reference key="1">
    <citation type="journal article" date="2000" name="DNA Res.">
        <title>Structural analysis of Arabidopsis thaliana chromosome 3. II. Sequence features of the 4,251,695 bp regions covered by 90 P1, TAC and BAC clones.</title>
        <authorList>
            <person name="Kaneko T."/>
            <person name="Katoh T."/>
            <person name="Sato S."/>
            <person name="Nakamura Y."/>
            <person name="Asamizu E."/>
            <person name="Tabata S."/>
        </authorList>
    </citation>
    <scope>NUCLEOTIDE SEQUENCE [LARGE SCALE GENOMIC DNA]</scope>
    <source>
        <strain>cv. Columbia</strain>
    </source>
</reference>
<reference key="2">
    <citation type="journal article" date="2017" name="Plant J.">
        <title>Araport11: a complete reannotation of the Arabidopsis thaliana reference genome.</title>
        <authorList>
            <person name="Cheng C.Y."/>
            <person name="Krishnakumar V."/>
            <person name="Chan A.P."/>
            <person name="Thibaud-Nissen F."/>
            <person name="Schobel S."/>
            <person name="Town C.D."/>
        </authorList>
    </citation>
    <scope>GENOME REANNOTATION</scope>
    <source>
        <strain>cv. Columbia</strain>
    </source>
</reference>
<reference key="3">
    <citation type="submission" date="2002-03" db="EMBL/GenBank/DDBJ databases">
        <title>Full-length cDNA from Arabidopsis thaliana.</title>
        <authorList>
            <person name="Brover V.V."/>
            <person name="Troukhan M.E."/>
            <person name="Alexandrov N.A."/>
            <person name="Lu Y.-P."/>
            <person name="Flavell R.B."/>
            <person name="Feldmann K.A."/>
        </authorList>
    </citation>
    <scope>NUCLEOTIDE SEQUENCE [LARGE SCALE MRNA]</scope>
</reference>
<reference key="4">
    <citation type="journal article" date="2004" name="EMBO J.">
        <title>The Arabidopsis cytochrome P450 CYP707A encodes ABA 8'-hydroxylases: key enzymes in ABA catabolism.</title>
        <authorList>
            <person name="Kushiro T."/>
            <person name="Okamoto M."/>
            <person name="Nakabayashi K."/>
            <person name="Yamagishi K."/>
            <person name="Kitamura S."/>
            <person name="Asami T."/>
            <person name="Hirai N."/>
            <person name="Koshiba T."/>
            <person name="Kamiya Y."/>
            <person name="Nambara E."/>
        </authorList>
    </citation>
    <scope>IDENTIFICATION</scope>
    <scope>FUNCTION</scope>
    <scope>TISSUE SPECIFICITY</scope>
    <scope>DEVELOPMENTAL STAGE</scope>
    <scope>INDUCTION</scope>
</reference>
<reference key="5">
    <citation type="journal article" date="2006" name="Plant Physiol.">
        <title>CYP707A1 and CYP707A2, which encode abscisic acid 8'-hydroxylases, are indispensable for proper control of seed dormancy and germination in Arabidopsis.</title>
        <authorList>
            <person name="Okamoto M."/>
            <person name="Kuwahara A."/>
            <person name="Seo M."/>
            <person name="Kushiro T."/>
            <person name="Asami T."/>
            <person name="Hirai N."/>
            <person name="Kamiya Y."/>
            <person name="Koshiba T."/>
            <person name="Nambara E."/>
        </authorList>
    </citation>
    <scope>FUNCTION</scope>
    <scope>DEVELOPMENTAL STAGE</scope>
    <scope>TISSUE SPECIFICITY</scope>
</reference>
<feature type="chain" id="PRO_0000288642" description="Abscisic acid 8'-hydroxylase 4">
    <location>
        <begin position="1"/>
        <end position="468"/>
    </location>
</feature>
<feature type="transmembrane region" description="Helical" evidence="3">
    <location>
        <begin position="4"/>
        <end position="24"/>
    </location>
</feature>
<feature type="binding site" description="axial binding residue" evidence="1">
    <location>
        <position position="415"/>
    </location>
    <ligand>
        <name>heme</name>
        <dbReference type="ChEBI" id="CHEBI:30413"/>
    </ligand>
    <ligandPart>
        <name>Fe</name>
        <dbReference type="ChEBI" id="CHEBI:18248"/>
    </ligandPart>
</feature>
<name>ABAH4_ARATH</name>
<evidence type="ECO:0000250" key="1"/>
<evidence type="ECO:0000250" key="2">
    <source>
        <dbReference type="UniProtKB" id="Q949P1"/>
    </source>
</evidence>
<evidence type="ECO:0000255" key="3"/>
<evidence type="ECO:0000269" key="4">
    <source>
    </source>
</evidence>
<evidence type="ECO:0000269" key="5">
    <source>
    </source>
</evidence>
<evidence type="ECO:0000305" key="6"/>
<protein>
    <recommendedName>
        <fullName>Abscisic acid 8'-hydroxylase 4</fullName>
        <shortName>ABA 8'-hydroxylase 4</shortName>
        <ecNumber evidence="2">1.14.14.137</ecNumber>
    </recommendedName>
    <alternativeName>
        <fullName>Cytochrome P450 707A4</fullName>
    </alternativeName>
</protein>